<organism>
    <name type="scientific">Yersinia pestis</name>
    <dbReference type="NCBI Taxonomy" id="632"/>
    <lineage>
        <taxon>Bacteria</taxon>
        <taxon>Pseudomonadati</taxon>
        <taxon>Pseudomonadota</taxon>
        <taxon>Gammaproteobacteria</taxon>
        <taxon>Enterobacterales</taxon>
        <taxon>Yersiniaceae</taxon>
        <taxon>Yersinia</taxon>
    </lineage>
</organism>
<name>PEPQ_YERPE</name>
<sequence length="443" mass="50912">METLASLYNEHLSTLQQRTRDVLERHQLDALLIHSGELQRLFLDDRDYPFKVNPQFKAWVPVTEVPNCWLWVDGVNTPKLWFYSPVDYWHSVEPLPDSFWTKNIDVQPLLNADDIAQQLPVQRERVAYIGYAQQRAQALGFSAENINPQPVLDYLHYYRSYKTDYELACMREAQKTAVVGHRAAYEAFQSGMSEFDINLAYLMATGHRDTDVPYDNIVALNEHSAVLHYTILQHQPPAEIRSFLIDAGAEYNGYAADLTRTYTADRDSDFAALISDLNTEQLALIDTIKSGERYTDYHVQMHQRIAKLLRTHNLVTGISEEAMVEQGITCPFLPHGLGHPLGLQVHDTAGFMQDDKGTNLNAPSKYPYLRCTRVLQPRMVLTIEPGLYFIDSLLAPWRIGEFSKHFNWDRIDALKPYGGIRIEDNIVIHDKRVENMTRDLKLA</sequence>
<proteinExistence type="inferred from homology"/>
<reference key="1">
    <citation type="journal article" date="2001" name="Nature">
        <title>Genome sequence of Yersinia pestis, the causative agent of plague.</title>
        <authorList>
            <person name="Parkhill J."/>
            <person name="Wren B.W."/>
            <person name="Thomson N.R."/>
            <person name="Titball R.W."/>
            <person name="Holden M.T.G."/>
            <person name="Prentice M.B."/>
            <person name="Sebaihia M."/>
            <person name="James K.D."/>
            <person name="Churcher C.M."/>
            <person name="Mungall K.L."/>
            <person name="Baker S."/>
            <person name="Basham D."/>
            <person name="Bentley S.D."/>
            <person name="Brooks K."/>
            <person name="Cerdeno-Tarraga A.-M."/>
            <person name="Chillingworth T."/>
            <person name="Cronin A."/>
            <person name="Davies R.M."/>
            <person name="Davis P."/>
            <person name="Dougan G."/>
            <person name="Feltwell T."/>
            <person name="Hamlin N."/>
            <person name="Holroyd S."/>
            <person name="Jagels K."/>
            <person name="Karlyshev A.V."/>
            <person name="Leather S."/>
            <person name="Moule S."/>
            <person name="Oyston P.C.F."/>
            <person name="Quail M.A."/>
            <person name="Rutherford K.M."/>
            <person name="Simmonds M."/>
            <person name="Skelton J."/>
            <person name="Stevens K."/>
            <person name="Whitehead S."/>
            <person name="Barrell B.G."/>
        </authorList>
    </citation>
    <scope>NUCLEOTIDE SEQUENCE [LARGE SCALE GENOMIC DNA]</scope>
    <source>
        <strain>CO-92 / Biovar Orientalis</strain>
    </source>
</reference>
<reference key="2">
    <citation type="journal article" date="2002" name="J. Bacteriol.">
        <title>Genome sequence of Yersinia pestis KIM.</title>
        <authorList>
            <person name="Deng W."/>
            <person name="Burland V."/>
            <person name="Plunkett G. III"/>
            <person name="Boutin A."/>
            <person name="Mayhew G.F."/>
            <person name="Liss P."/>
            <person name="Perna N.T."/>
            <person name="Rose D.J."/>
            <person name="Mau B."/>
            <person name="Zhou S."/>
            <person name="Schwartz D.C."/>
            <person name="Fetherston J.D."/>
            <person name="Lindler L.E."/>
            <person name="Brubaker R.R."/>
            <person name="Plano G.V."/>
            <person name="Straley S.C."/>
            <person name="McDonough K.A."/>
            <person name="Nilles M.L."/>
            <person name="Matson J.S."/>
            <person name="Blattner F.R."/>
            <person name="Perry R.D."/>
        </authorList>
    </citation>
    <scope>NUCLEOTIDE SEQUENCE [LARGE SCALE GENOMIC DNA]</scope>
    <source>
        <strain>KIM10+ / Biovar Mediaevalis</strain>
    </source>
</reference>
<reference key="3">
    <citation type="journal article" date="2004" name="DNA Res.">
        <title>Complete genome sequence of Yersinia pestis strain 91001, an isolate avirulent to humans.</title>
        <authorList>
            <person name="Song Y."/>
            <person name="Tong Z."/>
            <person name="Wang J."/>
            <person name="Wang L."/>
            <person name="Guo Z."/>
            <person name="Han Y."/>
            <person name="Zhang J."/>
            <person name="Pei D."/>
            <person name="Zhou D."/>
            <person name="Qin H."/>
            <person name="Pang X."/>
            <person name="Han Y."/>
            <person name="Zhai J."/>
            <person name="Li M."/>
            <person name="Cui B."/>
            <person name="Qi Z."/>
            <person name="Jin L."/>
            <person name="Dai R."/>
            <person name="Chen F."/>
            <person name="Li S."/>
            <person name="Ye C."/>
            <person name="Du Z."/>
            <person name="Lin W."/>
            <person name="Wang J."/>
            <person name="Yu J."/>
            <person name="Yang H."/>
            <person name="Wang J."/>
            <person name="Huang P."/>
            <person name="Yang R."/>
        </authorList>
    </citation>
    <scope>NUCLEOTIDE SEQUENCE [LARGE SCALE GENOMIC DNA]</scope>
    <source>
        <strain>91001 / Biovar Mediaevalis</strain>
    </source>
</reference>
<dbReference type="EC" id="3.4.13.9" evidence="1"/>
<dbReference type="EMBL" id="AL590842">
    <property type="protein sequence ID" value="CAL22352.1"/>
    <property type="molecule type" value="Genomic_DNA"/>
</dbReference>
<dbReference type="EMBL" id="AE009952">
    <property type="protein sequence ID" value="AAM84054.1"/>
    <property type="status" value="ALT_INIT"/>
    <property type="molecule type" value="Genomic_DNA"/>
</dbReference>
<dbReference type="EMBL" id="AE017042">
    <property type="protein sequence ID" value="AAS63450.1"/>
    <property type="status" value="ALT_INIT"/>
    <property type="molecule type" value="Genomic_DNA"/>
</dbReference>
<dbReference type="PIR" id="AE0458">
    <property type="entry name" value="AE0458"/>
</dbReference>
<dbReference type="RefSeq" id="WP_002211547.1">
    <property type="nucleotide sequence ID" value="NZ_WUCM01000112.1"/>
</dbReference>
<dbReference type="RefSeq" id="YP_002348644.1">
    <property type="nucleotide sequence ID" value="NC_003143.1"/>
</dbReference>
<dbReference type="SMR" id="Q0WAP4"/>
<dbReference type="IntAct" id="Q0WAP4">
    <property type="interactions" value="3"/>
</dbReference>
<dbReference type="STRING" id="214092.YPO3765"/>
<dbReference type="MEROPS" id="M24.003"/>
<dbReference type="PaxDb" id="214092-YPO3765"/>
<dbReference type="DNASU" id="1145412"/>
<dbReference type="EnsemblBacteria" id="AAS63450">
    <property type="protein sequence ID" value="AAS63450"/>
    <property type="gene ID" value="YP_3283"/>
</dbReference>
<dbReference type="GeneID" id="57974943"/>
<dbReference type="KEGG" id="ype:YPO3765"/>
<dbReference type="KEGG" id="ypk:y0465"/>
<dbReference type="KEGG" id="ypm:YP_3283"/>
<dbReference type="PATRIC" id="fig|214092.21.peg.4287"/>
<dbReference type="eggNOG" id="COG0006">
    <property type="taxonomic scope" value="Bacteria"/>
</dbReference>
<dbReference type="HOGENOM" id="CLU_050675_0_0_6"/>
<dbReference type="OMA" id="DFWHKVA"/>
<dbReference type="OrthoDB" id="9806388at2"/>
<dbReference type="Proteomes" id="UP000000815">
    <property type="component" value="Chromosome"/>
</dbReference>
<dbReference type="Proteomes" id="UP000001019">
    <property type="component" value="Chromosome"/>
</dbReference>
<dbReference type="Proteomes" id="UP000002490">
    <property type="component" value="Chromosome"/>
</dbReference>
<dbReference type="GO" id="GO:0005829">
    <property type="term" value="C:cytosol"/>
    <property type="evidence" value="ECO:0000318"/>
    <property type="project" value="GO_Central"/>
</dbReference>
<dbReference type="GO" id="GO:0004177">
    <property type="term" value="F:aminopeptidase activity"/>
    <property type="evidence" value="ECO:0000318"/>
    <property type="project" value="GO_Central"/>
</dbReference>
<dbReference type="GO" id="GO:0046872">
    <property type="term" value="F:metal ion binding"/>
    <property type="evidence" value="ECO:0007669"/>
    <property type="project" value="UniProtKB-KW"/>
</dbReference>
<dbReference type="GO" id="GO:0008235">
    <property type="term" value="F:metalloexopeptidase activity"/>
    <property type="evidence" value="ECO:0007669"/>
    <property type="project" value="UniProtKB-UniRule"/>
</dbReference>
<dbReference type="GO" id="GO:0016795">
    <property type="term" value="F:phosphoric triester hydrolase activity"/>
    <property type="evidence" value="ECO:0007669"/>
    <property type="project" value="InterPro"/>
</dbReference>
<dbReference type="GO" id="GO:0102009">
    <property type="term" value="F:proline dipeptidase activity"/>
    <property type="evidence" value="ECO:0007669"/>
    <property type="project" value="UniProtKB-EC"/>
</dbReference>
<dbReference type="GO" id="GO:0006508">
    <property type="term" value="P:proteolysis"/>
    <property type="evidence" value="ECO:0000318"/>
    <property type="project" value="GO_Central"/>
</dbReference>
<dbReference type="Gene3D" id="3.90.230.10">
    <property type="entry name" value="Creatinase/methionine aminopeptidase superfamily"/>
    <property type="match status" value="1"/>
</dbReference>
<dbReference type="Gene3D" id="3.40.350.10">
    <property type="entry name" value="Creatinase/prolidase N-terminal domain"/>
    <property type="match status" value="1"/>
</dbReference>
<dbReference type="HAMAP" id="MF_01279">
    <property type="entry name" value="X_Pro_dipeptid"/>
    <property type="match status" value="1"/>
</dbReference>
<dbReference type="InterPro" id="IPR029149">
    <property type="entry name" value="Creatin/AminoP/Spt16_N"/>
</dbReference>
<dbReference type="InterPro" id="IPR036005">
    <property type="entry name" value="Creatinase/aminopeptidase-like"/>
</dbReference>
<dbReference type="InterPro" id="IPR048819">
    <property type="entry name" value="PepQ_N"/>
</dbReference>
<dbReference type="InterPro" id="IPR000994">
    <property type="entry name" value="Pept_M24"/>
</dbReference>
<dbReference type="InterPro" id="IPR001131">
    <property type="entry name" value="Peptidase_M24B_aminopep-P_CS"/>
</dbReference>
<dbReference type="InterPro" id="IPR052433">
    <property type="entry name" value="X-Pro_dipept-like"/>
</dbReference>
<dbReference type="InterPro" id="IPR022846">
    <property type="entry name" value="X_Pro_dipept"/>
</dbReference>
<dbReference type="NCBIfam" id="NF010133">
    <property type="entry name" value="PRK13607.1"/>
    <property type="match status" value="1"/>
</dbReference>
<dbReference type="PANTHER" id="PTHR43226">
    <property type="entry name" value="XAA-PRO AMINOPEPTIDASE 3"/>
    <property type="match status" value="1"/>
</dbReference>
<dbReference type="PANTHER" id="PTHR43226:SF8">
    <property type="entry name" value="XAA-PRO DIPEPTIDASE"/>
    <property type="match status" value="1"/>
</dbReference>
<dbReference type="Pfam" id="PF21216">
    <property type="entry name" value="PepQ_N"/>
    <property type="match status" value="1"/>
</dbReference>
<dbReference type="Pfam" id="PF00557">
    <property type="entry name" value="Peptidase_M24"/>
    <property type="match status" value="1"/>
</dbReference>
<dbReference type="SUPFAM" id="SSF55920">
    <property type="entry name" value="Creatinase/aminopeptidase"/>
    <property type="match status" value="1"/>
</dbReference>
<dbReference type="PROSITE" id="PS00491">
    <property type="entry name" value="PROLINE_PEPTIDASE"/>
    <property type="match status" value="1"/>
</dbReference>
<keyword id="KW-0224">Dipeptidase</keyword>
<keyword id="KW-0378">Hydrolase</keyword>
<keyword id="KW-0464">Manganese</keyword>
<keyword id="KW-0479">Metal-binding</keyword>
<keyword id="KW-0482">Metalloprotease</keyword>
<keyword id="KW-0645">Protease</keyword>
<keyword id="KW-1185">Reference proteome</keyword>
<protein>
    <recommendedName>
        <fullName evidence="1">Xaa-Pro dipeptidase</fullName>
        <shortName evidence="1">X-Pro dipeptidase</shortName>
        <ecNumber evidence="1">3.4.13.9</ecNumber>
    </recommendedName>
    <alternativeName>
        <fullName evidence="1">Imidodipeptidase</fullName>
    </alternativeName>
    <alternativeName>
        <fullName evidence="1">Proline dipeptidase</fullName>
        <shortName evidence="1">Prolidase</shortName>
    </alternativeName>
</protein>
<evidence type="ECO:0000255" key="1">
    <source>
        <dbReference type="HAMAP-Rule" id="MF_01279"/>
    </source>
</evidence>
<evidence type="ECO:0000305" key="2"/>
<comment type="function">
    <text evidence="1">Splits dipeptides with a prolyl residue in the C-terminal position.</text>
</comment>
<comment type="catalytic activity">
    <reaction evidence="1">
        <text>Xaa-L-Pro dipeptide + H2O = an L-alpha-amino acid + L-proline</text>
        <dbReference type="Rhea" id="RHEA:76407"/>
        <dbReference type="ChEBI" id="CHEBI:15377"/>
        <dbReference type="ChEBI" id="CHEBI:59869"/>
        <dbReference type="ChEBI" id="CHEBI:60039"/>
        <dbReference type="ChEBI" id="CHEBI:195196"/>
        <dbReference type="EC" id="3.4.13.9"/>
    </reaction>
</comment>
<comment type="cofactor">
    <cofactor evidence="1">
        <name>Mn(2+)</name>
        <dbReference type="ChEBI" id="CHEBI:29035"/>
    </cofactor>
    <text evidence="1">Binds 2 manganese ions per subunit.</text>
</comment>
<comment type="similarity">
    <text evidence="1">Belongs to the peptidase M24B family. Bacterial-type prolidase subfamily.</text>
</comment>
<comment type="sequence caution" evidence="2">
    <conflict type="erroneous initiation">
        <sequence resource="EMBL-CDS" id="AAM84054"/>
    </conflict>
</comment>
<comment type="sequence caution" evidence="2">
    <conflict type="erroneous initiation">
        <sequence resource="EMBL-CDS" id="AAS63450"/>
    </conflict>
</comment>
<feature type="chain" id="PRO_0000303879" description="Xaa-Pro dipeptidase">
    <location>
        <begin position="1"/>
        <end position="443"/>
    </location>
</feature>
<feature type="binding site" evidence="1">
    <location>
        <position position="246"/>
    </location>
    <ligand>
        <name>Mn(2+)</name>
        <dbReference type="ChEBI" id="CHEBI:29035"/>
        <label>2</label>
    </ligand>
</feature>
<feature type="binding site" evidence="1">
    <location>
        <position position="257"/>
    </location>
    <ligand>
        <name>Mn(2+)</name>
        <dbReference type="ChEBI" id="CHEBI:29035"/>
        <label>1</label>
    </ligand>
</feature>
<feature type="binding site" evidence="1">
    <location>
        <position position="257"/>
    </location>
    <ligand>
        <name>Mn(2+)</name>
        <dbReference type="ChEBI" id="CHEBI:29035"/>
        <label>2</label>
    </ligand>
</feature>
<feature type="binding site" evidence="1">
    <location>
        <position position="339"/>
    </location>
    <ligand>
        <name>Mn(2+)</name>
        <dbReference type="ChEBI" id="CHEBI:29035"/>
        <label>1</label>
    </ligand>
</feature>
<feature type="binding site" evidence="1">
    <location>
        <position position="384"/>
    </location>
    <ligand>
        <name>Mn(2+)</name>
        <dbReference type="ChEBI" id="CHEBI:29035"/>
        <label>1</label>
    </ligand>
</feature>
<feature type="binding site" evidence="1">
    <location>
        <position position="423"/>
    </location>
    <ligand>
        <name>Mn(2+)</name>
        <dbReference type="ChEBI" id="CHEBI:29035"/>
        <label>1</label>
    </ligand>
</feature>
<feature type="binding site" evidence="1">
    <location>
        <position position="423"/>
    </location>
    <ligand>
        <name>Mn(2+)</name>
        <dbReference type="ChEBI" id="CHEBI:29035"/>
        <label>2</label>
    </ligand>
</feature>
<gene>
    <name evidence="1" type="primary">pepQ</name>
    <name type="ordered locus">YPO3765</name>
    <name type="ordered locus">y0465</name>
    <name type="ordered locus">YP_3283</name>
</gene>
<accession>Q0WAP4</accession>
<accession>Q74R11</accession>
<accession>Q8D1H7</accession>